<evidence type="ECO:0000255" key="1">
    <source>
        <dbReference type="HAMAP-Rule" id="MF_00912"/>
    </source>
</evidence>
<evidence type="ECO:0000255" key="2">
    <source>
        <dbReference type="PROSITE-ProRule" id="PRU01115"/>
    </source>
</evidence>
<sequence length="259" mass="30058">MADGKVIDIEQKVPDFREQRRRKSRRRLVLYISILAFFLLFVYYFQSDYSTVGHVDVYGTDMVDEKWVVESSGLTDGVSMWSYPFHEAVEELMEHPVIVSVEAERNWPRSITLYVDEYRTVGYLRSAENGAFYPLLNDGSILNQEEFQGSHVDEPLISGMDAHSELGRLAHELDELDEMVTRRISEVVHEPDQGEHHLTLYTTDGFTVYTEINDFASNMTAYPAVAIQLNPEEEGILHMRMTPYFEREGQEEEEIEIEE</sequence>
<dbReference type="EMBL" id="CP001791">
    <property type="protein sequence ID" value="ADH99165.1"/>
    <property type="molecule type" value="Genomic_DNA"/>
</dbReference>
<dbReference type="RefSeq" id="WP_013172589.1">
    <property type="nucleotide sequence ID" value="NC_014219.1"/>
</dbReference>
<dbReference type="STRING" id="439292.Bsel_1656"/>
<dbReference type="KEGG" id="bse:Bsel_1656"/>
<dbReference type="eggNOG" id="COG1589">
    <property type="taxonomic scope" value="Bacteria"/>
</dbReference>
<dbReference type="HOGENOM" id="CLU_046278_2_0_9"/>
<dbReference type="OrthoDB" id="1819027at2"/>
<dbReference type="Proteomes" id="UP000000271">
    <property type="component" value="Chromosome"/>
</dbReference>
<dbReference type="GO" id="GO:0032153">
    <property type="term" value="C:cell division site"/>
    <property type="evidence" value="ECO:0007669"/>
    <property type="project" value="UniProtKB-UniRule"/>
</dbReference>
<dbReference type="GO" id="GO:0005886">
    <property type="term" value="C:plasma membrane"/>
    <property type="evidence" value="ECO:0007669"/>
    <property type="project" value="UniProtKB-SubCell"/>
</dbReference>
<dbReference type="GO" id="GO:0043093">
    <property type="term" value="P:FtsZ-dependent cytokinesis"/>
    <property type="evidence" value="ECO:0007669"/>
    <property type="project" value="UniProtKB-UniRule"/>
</dbReference>
<dbReference type="Gene3D" id="3.40.50.10960">
    <property type="match status" value="1"/>
</dbReference>
<dbReference type="HAMAP" id="MF_00912">
    <property type="entry name" value="DivIB"/>
    <property type="match status" value="1"/>
</dbReference>
<dbReference type="InterPro" id="IPR005548">
    <property type="entry name" value="Cell_div_FtsQ/DivIB_C"/>
</dbReference>
<dbReference type="InterPro" id="IPR026580">
    <property type="entry name" value="DivIB"/>
</dbReference>
<dbReference type="InterPro" id="IPR050487">
    <property type="entry name" value="FtsQ_DivIB"/>
</dbReference>
<dbReference type="InterPro" id="IPR034746">
    <property type="entry name" value="POTRA"/>
</dbReference>
<dbReference type="InterPro" id="IPR013685">
    <property type="entry name" value="POTRA_FtsQ_type"/>
</dbReference>
<dbReference type="PANTHER" id="PTHR37820">
    <property type="entry name" value="CELL DIVISION PROTEIN DIVIB"/>
    <property type="match status" value="1"/>
</dbReference>
<dbReference type="PANTHER" id="PTHR37820:SF1">
    <property type="entry name" value="CELL DIVISION PROTEIN FTSQ"/>
    <property type="match status" value="1"/>
</dbReference>
<dbReference type="Pfam" id="PF03799">
    <property type="entry name" value="FtsQ_DivIB_C"/>
    <property type="match status" value="1"/>
</dbReference>
<dbReference type="Pfam" id="PF08478">
    <property type="entry name" value="POTRA_1"/>
    <property type="match status" value="1"/>
</dbReference>
<dbReference type="PROSITE" id="PS51779">
    <property type="entry name" value="POTRA"/>
    <property type="match status" value="1"/>
</dbReference>
<organism>
    <name type="scientific">Bacillus selenitireducens (strain ATCC 700615 / DSM 15326 / MLS10)</name>
    <dbReference type="NCBI Taxonomy" id="439292"/>
    <lineage>
        <taxon>Bacteria</taxon>
        <taxon>Bacillati</taxon>
        <taxon>Bacillota</taxon>
        <taxon>Bacilli</taxon>
        <taxon>Bacillales</taxon>
        <taxon>Bacillaceae</taxon>
        <taxon>Salisediminibacterium</taxon>
    </lineage>
</organism>
<gene>
    <name evidence="1" type="primary">divIB</name>
    <name type="ordered locus">Bsel_1656</name>
</gene>
<feature type="chain" id="PRO_0000414759" description="Cell division protein DivIB">
    <location>
        <begin position="1"/>
        <end position="259"/>
    </location>
</feature>
<feature type="topological domain" description="Cytoplasmic" evidence="1">
    <location>
        <begin position="1"/>
        <end position="27"/>
    </location>
</feature>
<feature type="transmembrane region" description="Helical" evidence="1">
    <location>
        <begin position="28"/>
        <end position="45"/>
    </location>
</feature>
<feature type="topological domain" description="Extracellular" evidence="1">
    <location>
        <begin position="46"/>
        <end position="259"/>
    </location>
</feature>
<feature type="domain" description="POTRA" evidence="2">
    <location>
        <begin position="50"/>
        <end position="118"/>
    </location>
</feature>
<accession>D6XTM9</accession>
<keyword id="KW-0131">Cell cycle</keyword>
<keyword id="KW-0132">Cell division</keyword>
<keyword id="KW-1003">Cell membrane</keyword>
<keyword id="KW-0472">Membrane</keyword>
<keyword id="KW-0812">Transmembrane</keyword>
<keyword id="KW-1133">Transmembrane helix</keyword>
<comment type="function">
    <text evidence="1">Cell division protein that may be involved in stabilizing or promoting the assembly of the division complex.</text>
</comment>
<comment type="subcellular location">
    <subcellularLocation>
        <location evidence="1">Cell membrane</location>
        <topology evidence="1">Single-pass type II membrane protein</topology>
    </subcellularLocation>
    <text evidence="1">Localizes to the division septum.</text>
</comment>
<comment type="similarity">
    <text evidence="1">Belongs to the FtsQ/DivIB family. DivIB subfamily.</text>
</comment>
<reference key="1">
    <citation type="submission" date="2009-10" db="EMBL/GenBank/DDBJ databases">
        <title>Complete sequence of Bacillus selenitireducens MLS10.</title>
        <authorList>
            <consortium name="US DOE Joint Genome Institute"/>
            <person name="Lucas S."/>
            <person name="Copeland A."/>
            <person name="Lapidus A."/>
            <person name="Glavina del Rio T."/>
            <person name="Dalin E."/>
            <person name="Tice H."/>
            <person name="Bruce D."/>
            <person name="Goodwin L."/>
            <person name="Pitluck S."/>
            <person name="Sims D."/>
            <person name="Brettin T."/>
            <person name="Detter J.C."/>
            <person name="Han C."/>
            <person name="Larimer F."/>
            <person name="Land M."/>
            <person name="Hauser L."/>
            <person name="Kyrpides N."/>
            <person name="Ovchinnikova G."/>
            <person name="Stolz J."/>
        </authorList>
    </citation>
    <scope>NUCLEOTIDE SEQUENCE [LARGE SCALE GENOMIC DNA]</scope>
    <source>
        <strain>ATCC 700615 / DSM 15326 / MLS10</strain>
    </source>
</reference>
<name>DIVIB_BACIE</name>
<protein>
    <recommendedName>
        <fullName evidence="1">Cell division protein DivIB</fullName>
    </recommendedName>
</protein>
<proteinExistence type="inferred from homology"/>